<name>EFTS_HYDS0</name>
<proteinExistence type="inferred from homology"/>
<sequence length="273" mass="30323">MAVSSENVKLLREMTGAGMLDCKKALEEANGDIDKAKEILRIKGLAKADKKASRETKEGLIVAKSTPSKGAMVELACETDFVARNGSFKELANKILDYVLENVGDTKGESRDSSILQGKIDGITIEELLKEAIAKIGENIQLKRYCVVEGPNFSYIHGGGRIGVLLSYEGDNLDVVKDVALQIAAMRPEFLSPETVPQDVIEREKAIYMEQAKKEGKPENMLEKIAEGKLKKFYEEKTLLHQKFIKDEKKTIQDYTKANNVTIKGFCRFEIGT</sequence>
<organism>
    <name type="scientific">Hydrogenobaculum sp. (strain Y04AAS1)</name>
    <dbReference type="NCBI Taxonomy" id="380749"/>
    <lineage>
        <taxon>Bacteria</taxon>
        <taxon>Pseudomonadati</taxon>
        <taxon>Aquificota</taxon>
        <taxon>Aquificia</taxon>
        <taxon>Aquificales</taxon>
        <taxon>Aquificaceae</taxon>
        <taxon>Hydrogenobaculum</taxon>
    </lineage>
</organism>
<reference key="1">
    <citation type="journal article" date="2009" name="J. Bacteriol.">
        <title>Complete and draft genome sequences of six members of the Aquificales.</title>
        <authorList>
            <person name="Reysenbach A.-L."/>
            <person name="Hamamura N."/>
            <person name="Podar M."/>
            <person name="Griffiths E."/>
            <person name="Ferreira S."/>
            <person name="Hochstein R."/>
            <person name="Heidelberg J."/>
            <person name="Johnson J."/>
            <person name="Mead D."/>
            <person name="Pohorille A."/>
            <person name="Sarmiento M."/>
            <person name="Schweighofer K."/>
            <person name="Seshadri R."/>
            <person name="Voytek M.A."/>
        </authorList>
    </citation>
    <scope>NUCLEOTIDE SEQUENCE [LARGE SCALE GENOMIC DNA]</scope>
    <source>
        <strain>Y04AAS1</strain>
    </source>
</reference>
<accession>B4U9Z9</accession>
<dbReference type="EMBL" id="CP001130">
    <property type="protein sequence ID" value="ACG57960.1"/>
    <property type="molecule type" value="Genomic_DNA"/>
</dbReference>
<dbReference type="RefSeq" id="WP_012514316.1">
    <property type="nucleotide sequence ID" value="NC_011126.1"/>
</dbReference>
<dbReference type="SMR" id="B4U9Z9"/>
<dbReference type="STRING" id="380749.HY04AAS1_1275"/>
<dbReference type="KEGG" id="hya:HY04AAS1_1275"/>
<dbReference type="eggNOG" id="COG0264">
    <property type="taxonomic scope" value="Bacteria"/>
</dbReference>
<dbReference type="HOGENOM" id="CLU_047155_0_2_0"/>
<dbReference type="OrthoDB" id="9808348at2"/>
<dbReference type="GO" id="GO:0005737">
    <property type="term" value="C:cytoplasm"/>
    <property type="evidence" value="ECO:0007669"/>
    <property type="project" value="UniProtKB-SubCell"/>
</dbReference>
<dbReference type="GO" id="GO:0003746">
    <property type="term" value="F:translation elongation factor activity"/>
    <property type="evidence" value="ECO:0007669"/>
    <property type="project" value="UniProtKB-UniRule"/>
</dbReference>
<dbReference type="CDD" id="cd14275">
    <property type="entry name" value="UBA_EF-Ts"/>
    <property type="match status" value="1"/>
</dbReference>
<dbReference type="FunFam" id="1.10.286.20:FF:000001">
    <property type="entry name" value="Elongation factor Ts"/>
    <property type="match status" value="1"/>
</dbReference>
<dbReference type="FunFam" id="1.10.8.10:FF:000001">
    <property type="entry name" value="Elongation factor Ts"/>
    <property type="match status" value="1"/>
</dbReference>
<dbReference type="Gene3D" id="1.10.286.20">
    <property type="match status" value="1"/>
</dbReference>
<dbReference type="Gene3D" id="1.10.8.10">
    <property type="entry name" value="DNA helicase RuvA subunit, C-terminal domain"/>
    <property type="match status" value="1"/>
</dbReference>
<dbReference type="Gene3D" id="3.30.479.20">
    <property type="entry name" value="Elongation factor Ts, dimerisation domain"/>
    <property type="match status" value="2"/>
</dbReference>
<dbReference type="HAMAP" id="MF_00050">
    <property type="entry name" value="EF_Ts"/>
    <property type="match status" value="1"/>
</dbReference>
<dbReference type="InterPro" id="IPR036402">
    <property type="entry name" value="EF-Ts_dimer_sf"/>
</dbReference>
<dbReference type="InterPro" id="IPR001816">
    <property type="entry name" value="Transl_elong_EFTs/EF1B"/>
</dbReference>
<dbReference type="InterPro" id="IPR014039">
    <property type="entry name" value="Transl_elong_EFTs/EF1B_dimer"/>
</dbReference>
<dbReference type="InterPro" id="IPR018101">
    <property type="entry name" value="Transl_elong_Ts_CS"/>
</dbReference>
<dbReference type="InterPro" id="IPR009060">
    <property type="entry name" value="UBA-like_sf"/>
</dbReference>
<dbReference type="NCBIfam" id="TIGR00116">
    <property type="entry name" value="tsf"/>
    <property type="match status" value="1"/>
</dbReference>
<dbReference type="PANTHER" id="PTHR11741">
    <property type="entry name" value="ELONGATION FACTOR TS"/>
    <property type="match status" value="1"/>
</dbReference>
<dbReference type="PANTHER" id="PTHR11741:SF0">
    <property type="entry name" value="ELONGATION FACTOR TS, MITOCHONDRIAL"/>
    <property type="match status" value="1"/>
</dbReference>
<dbReference type="Pfam" id="PF00889">
    <property type="entry name" value="EF_TS"/>
    <property type="match status" value="1"/>
</dbReference>
<dbReference type="SUPFAM" id="SSF54713">
    <property type="entry name" value="Elongation factor Ts (EF-Ts), dimerisation domain"/>
    <property type="match status" value="2"/>
</dbReference>
<dbReference type="SUPFAM" id="SSF46934">
    <property type="entry name" value="UBA-like"/>
    <property type="match status" value="1"/>
</dbReference>
<dbReference type="PROSITE" id="PS01126">
    <property type="entry name" value="EF_TS_1"/>
    <property type="match status" value="1"/>
</dbReference>
<comment type="function">
    <text evidence="1">Associates with the EF-Tu.GDP complex and induces the exchange of GDP to GTP. It remains bound to the aminoacyl-tRNA.EF-Tu.GTP complex up to the GTP hydrolysis stage on the ribosome.</text>
</comment>
<comment type="subcellular location">
    <subcellularLocation>
        <location evidence="1">Cytoplasm</location>
    </subcellularLocation>
</comment>
<comment type="similarity">
    <text evidence="1">Belongs to the EF-Ts family.</text>
</comment>
<gene>
    <name evidence="1" type="primary">tsf</name>
    <name type="ordered locus">HY04AAS1_1275</name>
</gene>
<feature type="chain" id="PRO_1000117583" description="Elongation factor Ts">
    <location>
        <begin position="1"/>
        <end position="273"/>
    </location>
</feature>
<feature type="region of interest" description="Involved in Mg(2+) ion dislocation from EF-Tu" evidence="1">
    <location>
        <begin position="79"/>
        <end position="82"/>
    </location>
</feature>
<evidence type="ECO:0000255" key="1">
    <source>
        <dbReference type="HAMAP-Rule" id="MF_00050"/>
    </source>
</evidence>
<keyword id="KW-0963">Cytoplasm</keyword>
<keyword id="KW-0251">Elongation factor</keyword>
<keyword id="KW-0648">Protein biosynthesis</keyword>
<protein>
    <recommendedName>
        <fullName evidence="1">Elongation factor Ts</fullName>
        <shortName evidence="1">EF-Ts</shortName>
    </recommendedName>
</protein>